<reference key="1">
    <citation type="journal article" date="2008" name="J. Bacteriol.">
        <title>Complete genome sequence of the mosquitocidal bacterium Bacillus sphaericus C3-41 and comparison with those of closely related Bacillus species.</title>
        <authorList>
            <person name="Hu X."/>
            <person name="Fan W."/>
            <person name="Han B."/>
            <person name="Liu H."/>
            <person name="Zheng D."/>
            <person name="Li Q."/>
            <person name="Dong W."/>
            <person name="Yan J."/>
            <person name="Gao M."/>
            <person name="Berry C."/>
            <person name="Yuan Z."/>
        </authorList>
    </citation>
    <scope>NUCLEOTIDE SEQUENCE [LARGE SCALE GENOMIC DNA]</scope>
    <source>
        <strain>C3-41</strain>
    </source>
</reference>
<proteinExistence type="inferred from homology"/>
<gene>
    <name evidence="1" type="primary">hisS</name>
    <name type="ordered locus">Bsph_3902</name>
</gene>
<comment type="catalytic activity">
    <reaction evidence="1">
        <text>tRNA(His) + L-histidine + ATP = L-histidyl-tRNA(His) + AMP + diphosphate + H(+)</text>
        <dbReference type="Rhea" id="RHEA:17313"/>
        <dbReference type="Rhea" id="RHEA-COMP:9665"/>
        <dbReference type="Rhea" id="RHEA-COMP:9689"/>
        <dbReference type="ChEBI" id="CHEBI:15378"/>
        <dbReference type="ChEBI" id="CHEBI:30616"/>
        <dbReference type="ChEBI" id="CHEBI:33019"/>
        <dbReference type="ChEBI" id="CHEBI:57595"/>
        <dbReference type="ChEBI" id="CHEBI:78442"/>
        <dbReference type="ChEBI" id="CHEBI:78527"/>
        <dbReference type="ChEBI" id="CHEBI:456215"/>
        <dbReference type="EC" id="6.1.1.21"/>
    </reaction>
</comment>
<comment type="subunit">
    <text evidence="1">Homodimer.</text>
</comment>
<comment type="subcellular location">
    <subcellularLocation>
        <location evidence="1">Cytoplasm</location>
    </subcellularLocation>
</comment>
<comment type="similarity">
    <text evidence="1">Belongs to the class-II aminoacyl-tRNA synthetase family.</text>
</comment>
<protein>
    <recommendedName>
        <fullName evidence="1">Histidine--tRNA ligase</fullName>
        <ecNumber evidence="1">6.1.1.21</ecNumber>
    </recommendedName>
    <alternativeName>
        <fullName evidence="1">Histidyl-tRNA synthetase</fullName>
        <shortName evidence="1">HisRS</shortName>
    </alternativeName>
</protein>
<accession>B1HV72</accession>
<sequence length="422" mass="47154">MSFKVPRGTQDILPGQSEKWQKVEAIIRDICRVYRYNEIRTPIFEQTDLFARGVGETTDVVQKEMYTFEDRGGRSLTLRPENTAGVVRAYVEHKMFGAPDQPVKLSYLGPMFRYERQQAGRYRQFVQFGVEAIGSADPAIDAEVIALAMDVYESAGLKDLKLVINSLGDKETRDTHRTALLQHFEPHIHEFCSDCQNRLQKNPLRILDCKVDREHPLMKTAPALTEFLTEESAAYFAQVKSYLDTLGITYVVDPNLVRGLDYYNHTTFEIMSTASGFGAITTLCGGGRYNGLVQEIGGPDVPGIGFALSIERLLLALEAEGVELDTASGLDVYIIAMGEDAKQKAVELTSTFRAKGLATEMDYLDRKMKAQMKSADRLGAKYTIVLGETELEEQAAAVKHMESGEQHKVAFSELVNYLSQQS</sequence>
<organism>
    <name type="scientific">Lysinibacillus sphaericus (strain C3-41)</name>
    <dbReference type="NCBI Taxonomy" id="444177"/>
    <lineage>
        <taxon>Bacteria</taxon>
        <taxon>Bacillati</taxon>
        <taxon>Bacillota</taxon>
        <taxon>Bacilli</taxon>
        <taxon>Bacillales</taxon>
        <taxon>Bacillaceae</taxon>
        <taxon>Lysinibacillus</taxon>
    </lineage>
</organism>
<keyword id="KW-0030">Aminoacyl-tRNA synthetase</keyword>
<keyword id="KW-0067">ATP-binding</keyword>
<keyword id="KW-0963">Cytoplasm</keyword>
<keyword id="KW-0436">Ligase</keyword>
<keyword id="KW-0547">Nucleotide-binding</keyword>
<keyword id="KW-0648">Protein biosynthesis</keyword>
<name>SYH_LYSSC</name>
<dbReference type="EC" id="6.1.1.21" evidence="1"/>
<dbReference type="EMBL" id="CP000817">
    <property type="protein sequence ID" value="ACA41374.1"/>
    <property type="molecule type" value="Genomic_DNA"/>
</dbReference>
<dbReference type="RefSeq" id="WP_012295419.1">
    <property type="nucleotide sequence ID" value="NC_010382.1"/>
</dbReference>
<dbReference type="SMR" id="B1HV72"/>
<dbReference type="EnsemblBacteria" id="ACA41374">
    <property type="protein sequence ID" value="ACA41374"/>
    <property type="gene ID" value="Bsph_3902"/>
</dbReference>
<dbReference type="KEGG" id="lsp:Bsph_3902"/>
<dbReference type="HOGENOM" id="CLU_025113_1_1_9"/>
<dbReference type="Proteomes" id="UP000002164">
    <property type="component" value="Chromosome"/>
</dbReference>
<dbReference type="GO" id="GO:0005737">
    <property type="term" value="C:cytoplasm"/>
    <property type="evidence" value="ECO:0007669"/>
    <property type="project" value="UniProtKB-SubCell"/>
</dbReference>
<dbReference type="GO" id="GO:0005524">
    <property type="term" value="F:ATP binding"/>
    <property type="evidence" value="ECO:0007669"/>
    <property type="project" value="UniProtKB-UniRule"/>
</dbReference>
<dbReference type="GO" id="GO:0140096">
    <property type="term" value="F:catalytic activity, acting on a protein"/>
    <property type="evidence" value="ECO:0007669"/>
    <property type="project" value="UniProtKB-ARBA"/>
</dbReference>
<dbReference type="GO" id="GO:0004821">
    <property type="term" value="F:histidine-tRNA ligase activity"/>
    <property type="evidence" value="ECO:0007669"/>
    <property type="project" value="UniProtKB-UniRule"/>
</dbReference>
<dbReference type="GO" id="GO:0016740">
    <property type="term" value="F:transferase activity"/>
    <property type="evidence" value="ECO:0007669"/>
    <property type="project" value="UniProtKB-ARBA"/>
</dbReference>
<dbReference type="GO" id="GO:0006427">
    <property type="term" value="P:histidyl-tRNA aminoacylation"/>
    <property type="evidence" value="ECO:0007669"/>
    <property type="project" value="UniProtKB-UniRule"/>
</dbReference>
<dbReference type="CDD" id="cd00773">
    <property type="entry name" value="HisRS-like_core"/>
    <property type="match status" value="1"/>
</dbReference>
<dbReference type="CDD" id="cd00859">
    <property type="entry name" value="HisRS_anticodon"/>
    <property type="match status" value="1"/>
</dbReference>
<dbReference type="FunFam" id="3.30.930.10:FF:000005">
    <property type="entry name" value="Histidine--tRNA ligase"/>
    <property type="match status" value="1"/>
</dbReference>
<dbReference type="Gene3D" id="3.40.50.800">
    <property type="entry name" value="Anticodon-binding domain"/>
    <property type="match status" value="1"/>
</dbReference>
<dbReference type="Gene3D" id="3.30.930.10">
    <property type="entry name" value="Bira Bifunctional Protein, Domain 2"/>
    <property type="match status" value="1"/>
</dbReference>
<dbReference type="HAMAP" id="MF_00127">
    <property type="entry name" value="His_tRNA_synth"/>
    <property type="match status" value="1"/>
</dbReference>
<dbReference type="InterPro" id="IPR006195">
    <property type="entry name" value="aa-tRNA-synth_II"/>
</dbReference>
<dbReference type="InterPro" id="IPR045864">
    <property type="entry name" value="aa-tRNA-synth_II/BPL/LPL"/>
</dbReference>
<dbReference type="InterPro" id="IPR004154">
    <property type="entry name" value="Anticodon-bd"/>
</dbReference>
<dbReference type="InterPro" id="IPR036621">
    <property type="entry name" value="Anticodon-bd_dom_sf"/>
</dbReference>
<dbReference type="InterPro" id="IPR015807">
    <property type="entry name" value="His-tRNA-ligase"/>
</dbReference>
<dbReference type="InterPro" id="IPR041715">
    <property type="entry name" value="HisRS-like_core"/>
</dbReference>
<dbReference type="InterPro" id="IPR004516">
    <property type="entry name" value="HisRS/HisZ"/>
</dbReference>
<dbReference type="InterPro" id="IPR033656">
    <property type="entry name" value="HisRS_anticodon"/>
</dbReference>
<dbReference type="NCBIfam" id="TIGR00442">
    <property type="entry name" value="hisS"/>
    <property type="match status" value="1"/>
</dbReference>
<dbReference type="PANTHER" id="PTHR43707:SF1">
    <property type="entry name" value="HISTIDINE--TRNA LIGASE, MITOCHONDRIAL-RELATED"/>
    <property type="match status" value="1"/>
</dbReference>
<dbReference type="PANTHER" id="PTHR43707">
    <property type="entry name" value="HISTIDYL-TRNA SYNTHETASE"/>
    <property type="match status" value="1"/>
</dbReference>
<dbReference type="Pfam" id="PF03129">
    <property type="entry name" value="HGTP_anticodon"/>
    <property type="match status" value="1"/>
</dbReference>
<dbReference type="Pfam" id="PF13393">
    <property type="entry name" value="tRNA-synt_His"/>
    <property type="match status" value="1"/>
</dbReference>
<dbReference type="PIRSF" id="PIRSF001549">
    <property type="entry name" value="His-tRNA_synth"/>
    <property type="match status" value="1"/>
</dbReference>
<dbReference type="SUPFAM" id="SSF52954">
    <property type="entry name" value="Class II aaRS ABD-related"/>
    <property type="match status" value="1"/>
</dbReference>
<dbReference type="SUPFAM" id="SSF55681">
    <property type="entry name" value="Class II aaRS and biotin synthetases"/>
    <property type="match status" value="1"/>
</dbReference>
<dbReference type="PROSITE" id="PS50862">
    <property type="entry name" value="AA_TRNA_LIGASE_II"/>
    <property type="match status" value="1"/>
</dbReference>
<evidence type="ECO:0000255" key="1">
    <source>
        <dbReference type="HAMAP-Rule" id="MF_00127"/>
    </source>
</evidence>
<feature type="chain" id="PRO_1000095569" description="Histidine--tRNA ligase">
    <location>
        <begin position="1"/>
        <end position="422"/>
    </location>
</feature>